<sequence length="143" mass="15065">MAKKKVVTQIKLQCPAGKATPAPPIGPALGPHGVSAPQFVQQFNDRTKSMEPGLVIPVVITVYADKSFTFILKTPPASVLIKKACKIEKGSATSVTAKVGKLSKAALEEIAKTKMPDINANDIEAAKKIIAGTARSMGVEVER</sequence>
<keyword id="KW-0488">Methylation</keyword>
<keyword id="KW-1185">Reference proteome</keyword>
<keyword id="KW-0687">Ribonucleoprotein</keyword>
<keyword id="KW-0689">Ribosomal protein</keyword>
<keyword id="KW-0694">RNA-binding</keyword>
<keyword id="KW-0699">rRNA-binding</keyword>
<dbReference type="EMBL" id="AE017226">
    <property type="protein sequence ID" value="AAS12943.1"/>
    <property type="molecule type" value="Genomic_DNA"/>
</dbReference>
<dbReference type="RefSeq" id="NP_973024.1">
    <property type="nucleotide sequence ID" value="NC_002967.9"/>
</dbReference>
<dbReference type="RefSeq" id="WP_002667599.1">
    <property type="nucleotide sequence ID" value="NC_002967.9"/>
</dbReference>
<dbReference type="SMR" id="P62443"/>
<dbReference type="STRING" id="243275.TDE_2425"/>
<dbReference type="PaxDb" id="243275-TDE_2425"/>
<dbReference type="GeneID" id="2739850"/>
<dbReference type="KEGG" id="tde:TDE_2425"/>
<dbReference type="PATRIC" id="fig|243275.7.peg.2292"/>
<dbReference type="eggNOG" id="COG0080">
    <property type="taxonomic scope" value="Bacteria"/>
</dbReference>
<dbReference type="HOGENOM" id="CLU_074237_2_1_12"/>
<dbReference type="OrthoDB" id="9802408at2"/>
<dbReference type="Proteomes" id="UP000008212">
    <property type="component" value="Chromosome"/>
</dbReference>
<dbReference type="GO" id="GO:0022625">
    <property type="term" value="C:cytosolic large ribosomal subunit"/>
    <property type="evidence" value="ECO:0007669"/>
    <property type="project" value="TreeGrafter"/>
</dbReference>
<dbReference type="GO" id="GO:0070180">
    <property type="term" value="F:large ribosomal subunit rRNA binding"/>
    <property type="evidence" value="ECO:0007669"/>
    <property type="project" value="UniProtKB-UniRule"/>
</dbReference>
<dbReference type="GO" id="GO:0003735">
    <property type="term" value="F:structural constituent of ribosome"/>
    <property type="evidence" value="ECO:0007669"/>
    <property type="project" value="InterPro"/>
</dbReference>
<dbReference type="GO" id="GO:0006412">
    <property type="term" value="P:translation"/>
    <property type="evidence" value="ECO:0007669"/>
    <property type="project" value="UniProtKB-UniRule"/>
</dbReference>
<dbReference type="CDD" id="cd00349">
    <property type="entry name" value="Ribosomal_L11"/>
    <property type="match status" value="1"/>
</dbReference>
<dbReference type="FunFam" id="1.10.10.250:FF:000001">
    <property type="entry name" value="50S ribosomal protein L11"/>
    <property type="match status" value="1"/>
</dbReference>
<dbReference type="FunFam" id="3.30.1550.10:FF:000006">
    <property type="entry name" value="50S ribosomal protein L11"/>
    <property type="match status" value="1"/>
</dbReference>
<dbReference type="Gene3D" id="1.10.10.250">
    <property type="entry name" value="Ribosomal protein L11, C-terminal domain"/>
    <property type="match status" value="1"/>
</dbReference>
<dbReference type="Gene3D" id="3.30.1550.10">
    <property type="entry name" value="Ribosomal protein L11/L12, N-terminal domain"/>
    <property type="match status" value="1"/>
</dbReference>
<dbReference type="HAMAP" id="MF_00736">
    <property type="entry name" value="Ribosomal_uL11"/>
    <property type="match status" value="1"/>
</dbReference>
<dbReference type="InterPro" id="IPR000911">
    <property type="entry name" value="Ribosomal_uL11"/>
</dbReference>
<dbReference type="InterPro" id="IPR006519">
    <property type="entry name" value="Ribosomal_uL11_bac-typ"/>
</dbReference>
<dbReference type="InterPro" id="IPR020783">
    <property type="entry name" value="Ribosomal_uL11_C"/>
</dbReference>
<dbReference type="InterPro" id="IPR036769">
    <property type="entry name" value="Ribosomal_uL11_C_sf"/>
</dbReference>
<dbReference type="InterPro" id="IPR020785">
    <property type="entry name" value="Ribosomal_uL11_CS"/>
</dbReference>
<dbReference type="InterPro" id="IPR020784">
    <property type="entry name" value="Ribosomal_uL11_N"/>
</dbReference>
<dbReference type="InterPro" id="IPR036796">
    <property type="entry name" value="Ribosomal_uL11_N_sf"/>
</dbReference>
<dbReference type="NCBIfam" id="TIGR01632">
    <property type="entry name" value="L11_bact"/>
    <property type="match status" value="1"/>
</dbReference>
<dbReference type="PANTHER" id="PTHR11661">
    <property type="entry name" value="60S RIBOSOMAL PROTEIN L12"/>
    <property type="match status" value="1"/>
</dbReference>
<dbReference type="PANTHER" id="PTHR11661:SF1">
    <property type="entry name" value="LARGE RIBOSOMAL SUBUNIT PROTEIN UL11M"/>
    <property type="match status" value="1"/>
</dbReference>
<dbReference type="Pfam" id="PF00298">
    <property type="entry name" value="Ribosomal_L11"/>
    <property type="match status" value="1"/>
</dbReference>
<dbReference type="Pfam" id="PF03946">
    <property type="entry name" value="Ribosomal_L11_N"/>
    <property type="match status" value="1"/>
</dbReference>
<dbReference type="SMART" id="SM00649">
    <property type="entry name" value="RL11"/>
    <property type="match status" value="1"/>
</dbReference>
<dbReference type="SUPFAM" id="SSF54747">
    <property type="entry name" value="Ribosomal L11/L12e N-terminal domain"/>
    <property type="match status" value="1"/>
</dbReference>
<dbReference type="SUPFAM" id="SSF46906">
    <property type="entry name" value="Ribosomal protein L11, C-terminal domain"/>
    <property type="match status" value="1"/>
</dbReference>
<dbReference type="PROSITE" id="PS00359">
    <property type="entry name" value="RIBOSOMAL_L11"/>
    <property type="match status" value="1"/>
</dbReference>
<accession>P62443</accession>
<evidence type="ECO:0000255" key="1">
    <source>
        <dbReference type="HAMAP-Rule" id="MF_00736"/>
    </source>
</evidence>
<evidence type="ECO:0000305" key="2"/>
<feature type="chain" id="PRO_0000104402" description="Large ribosomal subunit protein uL11">
    <location>
        <begin position="1"/>
        <end position="143"/>
    </location>
</feature>
<reference key="1">
    <citation type="journal article" date="2004" name="Proc. Natl. Acad. Sci. U.S.A.">
        <title>Comparison of the genome of the oral pathogen Treponema denticola with other spirochete genomes.</title>
        <authorList>
            <person name="Seshadri R."/>
            <person name="Myers G.S.A."/>
            <person name="Tettelin H."/>
            <person name="Eisen J.A."/>
            <person name="Heidelberg J.F."/>
            <person name="Dodson R.J."/>
            <person name="Davidsen T.M."/>
            <person name="DeBoy R.T."/>
            <person name="Fouts D.E."/>
            <person name="Haft D.H."/>
            <person name="Selengut J."/>
            <person name="Ren Q."/>
            <person name="Brinkac L.M."/>
            <person name="Madupu R."/>
            <person name="Kolonay J.F."/>
            <person name="Durkin S.A."/>
            <person name="Daugherty S.C."/>
            <person name="Shetty J."/>
            <person name="Shvartsbeyn A."/>
            <person name="Gebregeorgis E."/>
            <person name="Geer K."/>
            <person name="Tsegaye G."/>
            <person name="Malek J.A."/>
            <person name="Ayodeji B."/>
            <person name="Shatsman S."/>
            <person name="McLeod M.P."/>
            <person name="Smajs D."/>
            <person name="Howell J.K."/>
            <person name="Pal S."/>
            <person name="Amin A."/>
            <person name="Vashisth P."/>
            <person name="McNeill T.Z."/>
            <person name="Xiang Q."/>
            <person name="Sodergren E."/>
            <person name="Baca E."/>
            <person name="Weinstock G.M."/>
            <person name="Norris S.J."/>
            <person name="Fraser C.M."/>
            <person name="Paulsen I.T."/>
        </authorList>
    </citation>
    <scope>NUCLEOTIDE SEQUENCE [LARGE SCALE GENOMIC DNA]</scope>
    <source>
        <strain>ATCC 35405 / DSM 14222 / CIP 103919 / JCM 8153 / KCTC 15104</strain>
    </source>
</reference>
<organism>
    <name type="scientific">Treponema denticola (strain ATCC 35405 / DSM 14222 / CIP 103919 / JCM 8153 / KCTC 15104)</name>
    <dbReference type="NCBI Taxonomy" id="243275"/>
    <lineage>
        <taxon>Bacteria</taxon>
        <taxon>Pseudomonadati</taxon>
        <taxon>Spirochaetota</taxon>
        <taxon>Spirochaetia</taxon>
        <taxon>Spirochaetales</taxon>
        <taxon>Treponemataceae</taxon>
        <taxon>Treponema</taxon>
    </lineage>
</organism>
<gene>
    <name evidence="1" type="primary">rplK</name>
    <name type="ordered locus">TDE_2425</name>
</gene>
<protein>
    <recommendedName>
        <fullName evidence="1">Large ribosomal subunit protein uL11</fullName>
    </recommendedName>
    <alternativeName>
        <fullName evidence="2">50S ribosomal protein L11</fullName>
    </alternativeName>
</protein>
<proteinExistence type="inferred from homology"/>
<comment type="function">
    <text evidence="1">Forms part of the ribosomal stalk which helps the ribosome interact with GTP-bound translation factors.</text>
</comment>
<comment type="subunit">
    <text evidence="1">Part of the ribosomal stalk of the 50S ribosomal subunit. Interacts with L10 and the large rRNA to form the base of the stalk. L10 forms an elongated spine to which L12 dimers bind in a sequential fashion forming a multimeric L10(L12)X complex.</text>
</comment>
<comment type="PTM">
    <text evidence="1">One or more lysine residues are methylated.</text>
</comment>
<comment type="similarity">
    <text evidence="1">Belongs to the universal ribosomal protein uL11 family.</text>
</comment>
<name>RL11_TREDE</name>